<accession>Q6GB52</accession>
<protein>
    <recommendedName>
        <fullName>Probable protein-export membrane protein SecG</fullName>
    </recommendedName>
</protein>
<keyword id="KW-1003">Cell membrane</keyword>
<keyword id="KW-0472">Membrane</keyword>
<keyword id="KW-0653">Protein transport</keyword>
<keyword id="KW-0811">Translocation</keyword>
<keyword id="KW-0812">Transmembrane</keyword>
<keyword id="KW-1133">Transmembrane helix</keyword>
<keyword id="KW-0813">Transport</keyword>
<sequence length="77" mass="8399">MHTFLIVLLIIDCIALITVVLLQEGKSSGLSGAISGGAEQLFGKQKQRGVDLFLNRLTIILSILFFVLMICISYLGM</sequence>
<proteinExistence type="inferred from homology"/>
<reference key="1">
    <citation type="journal article" date="2004" name="Proc. Natl. Acad. Sci. U.S.A.">
        <title>Complete genomes of two clinical Staphylococcus aureus strains: evidence for the rapid evolution of virulence and drug resistance.</title>
        <authorList>
            <person name="Holden M.T.G."/>
            <person name="Feil E.J."/>
            <person name="Lindsay J.A."/>
            <person name="Peacock S.J."/>
            <person name="Day N.P.J."/>
            <person name="Enright M.C."/>
            <person name="Foster T.J."/>
            <person name="Moore C.E."/>
            <person name="Hurst L."/>
            <person name="Atkin R."/>
            <person name="Barron A."/>
            <person name="Bason N."/>
            <person name="Bentley S.D."/>
            <person name="Chillingworth C."/>
            <person name="Chillingworth T."/>
            <person name="Churcher C."/>
            <person name="Clark L."/>
            <person name="Corton C."/>
            <person name="Cronin A."/>
            <person name="Doggett J."/>
            <person name="Dowd L."/>
            <person name="Feltwell T."/>
            <person name="Hance Z."/>
            <person name="Harris B."/>
            <person name="Hauser H."/>
            <person name="Holroyd S."/>
            <person name="Jagels K."/>
            <person name="James K.D."/>
            <person name="Lennard N."/>
            <person name="Line A."/>
            <person name="Mayes R."/>
            <person name="Moule S."/>
            <person name="Mungall K."/>
            <person name="Ormond D."/>
            <person name="Quail M.A."/>
            <person name="Rabbinowitsch E."/>
            <person name="Rutherford K.M."/>
            <person name="Sanders M."/>
            <person name="Sharp S."/>
            <person name="Simmonds M."/>
            <person name="Stevens K."/>
            <person name="Whitehead S."/>
            <person name="Barrell B.G."/>
            <person name="Spratt B.G."/>
            <person name="Parkhill J."/>
        </authorList>
    </citation>
    <scope>NUCLEOTIDE SEQUENCE [LARGE SCALE GENOMIC DNA]</scope>
    <source>
        <strain>MSSA476</strain>
    </source>
</reference>
<organism>
    <name type="scientific">Staphylococcus aureus (strain MSSA476)</name>
    <dbReference type="NCBI Taxonomy" id="282459"/>
    <lineage>
        <taxon>Bacteria</taxon>
        <taxon>Bacillati</taxon>
        <taxon>Bacillota</taxon>
        <taxon>Bacilli</taxon>
        <taxon>Bacillales</taxon>
        <taxon>Staphylococcaceae</taxon>
        <taxon>Staphylococcus</taxon>
    </lineage>
</organism>
<gene>
    <name type="primary">secG</name>
    <name type="ordered locus">SAS0744</name>
</gene>
<evidence type="ECO:0000250" key="1"/>
<evidence type="ECO:0000255" key="2"/>
<evidence type="ECO:0000305" key="3"/>
<feature type="chain" id="PRO_0000157244" description="Probable protein-export membrane protein SecG">
    <location>
        <begin position="1"/>
        <end position="77"/>
    </location>
</feature>
<feature type="transmembrane region" description="Helical" evidence="2">
    <location>
        <begin position="2"/>
        <end position="22"/>
    </location>
</feature>
<feature type="transmembrane region" description="Helical" evidence="2">
    <location>
        <begin position="57"/>
        <end position="77"/>
    </location>
</feature>
<comment type="function">
    <text evidence="1">Involved in protein export. Participates in an early event of protein translocation (By similarity).</text>
</comment>
<comment type="subcellular location">
    <subcellularLocation>
        <location evidence="1">Cell membrane</location>
        <topology evidence="1">Multi-pass membrane protein</topology>
    </subcellularLocation>
</comment>
<comment type="similarity">
    <text evidence="3">Belongs to the SecG family.</text>
</comment>
<name>SECG_STAAS</name>
<dbReference type="EMBL" id="BX571857">
    <property type="protein sequence ID" value="CAG42519.1"/>
    <property type="molecule type" value="Genomic_DNA"/>
</dbReference>
<dbReference type="RefSeq" id="WP_000556760.1">
    <property type="nucleotide sequence ID" value="NC_002953.3"/>
</dbReference>
<dbReference type="GeneID" id="98345127"/>
<dbReference type="KEGG" id="sas:SAS0744"/>
<dbReference type="HOGENOM" id="CLU_094156_6_1_9"/>
<dbReference type="GO" id="GO:0005886">
    <property type="term" value="C:plasma membrane"/>
    <property type="evidence" value="ECO:0007669"/>
    <property type="project" value="UniProtKB-SubCell"/>
</dbReference>
<dbReference type="GO" id="GO:0015450">
    <property type="term" value="F:protein-transporting ATPase activity"/>
    <property type="evidence" value="ECO:0007669"/>
    <property type="project" value="InterPro"/>
</dbReference>
<dbReference type="GO" id="GO:0065002">
    <property type="term" value="P:intracellular protein transmembrane transport"/>
    <property type="evidence" value="ECO:0007669"/>
    <property type="project" value="TreeGrafter"/>
</dbReference>
<dbReference type="GO" id="GO:0009306">
    <property type="term" value="P:protein secretion"/>
    <property type="evidence" value="ECO:0007669"/>
    <property type="project" value="InterPro"/>
</dbReference>
<dbReference type="GO" id="GO:0043952">
    <property type="term" value="P:protein transport by the Sec complex"/>
    <property type="evidence" value="ECO:0007669"/>
    <property type="project" value="TreeGrafter"/>
</dbReference>
<dbReference type="InterPro" id="IPR004692">
    <property type="entry name" value="SecG"/>
</dbReference>
<dbReference type="NCBIfam" id="TIGR00810">
    <property type="entry name" value="secG"/>
    <property type="match status" value="1"/>
</dbReference>
<dbReference type="PANTHER" id="PTHR34182">
    <property type="entry name" value="PROTEIN-EXPORT MEMBRANE PROTEIN SECG"/>
    <property type="match status" value="1"/>
</dbReference>
<dbReference type="PANTHER" id="PTHR34182:SF1">
    <property type="entry name" value="PROTEIN-EXPORT MEMBRANE PROTEIN SECG"/>
    <property type="match status" value="1"/>
</dbReference>
<dbReference type="Pfam" id="PF03840">
    <property type="entry name" value="SecG"/>
    <property type="match status" value="1"/>
</dbReference>
<dbReference type="PRINTS" id="PR01651">
    <property type="entry name" value="SECGEXPORT"/>
</dbReference>